<accession>Q12SR9</accession>
<feature type="initiator methionine" description="Removed" evidence="1">
    <location>
        <position position="1"/>
    </location>
</feature>
<feature type="chain" id="PRO_1000008772" description="Formamidopyrimidine-DNA glycosylase">
    <location>
        <begin position="2"/>
        <end position="271"/>
    </location>
</feature>
<feature type="zinc finger region" description="FPG-type" evidence="2">
    <location>
        <begin position="236"/>
        <end position="270"/>
    </location>
</feature>
<feature type="active site" description="Schiff-base intermediate with DNA" evidence="2">
    <location>
        <position position="2"/>
    </location>
</feature>
<feature type="active site" description="Proton donor" evidence="2">
    <location>
        <position position="3"/>
    </location>
</feature>
<feature type="active site" description="Proton donor; for beta-elimination activity" evidence="2">
    <location>
        <position position="57"/>
    </location>
</feature>
<feature type="active site" description="Proton donor; for delta-elimination activity" evidence="2">
    <location>
        <position position="260"/>
    </location>
</feature>
<feature type="binding site" evidence="2">
    <location>
        <position position="90"/>
    </location>
    <ligand>
        <name>DNA</name>
        <dbReference type="ChEBI" id="CHEBI:16991"/>
    </ligand>
</feature>
<feature type="binding site" evidence="2">
    <location>
        <position position="109"/>
    </location>
    <ligand>
        <name>DNA</name>
        <dbReference type="ChEBI" id="CHEBI:16991"/>
    </ligand>
</feature>
<feature type="binding site" evidence="2">
    <location>
        <position position="151"/>
    </location>
    <ligand>
        <name>DNA</name>
        <dbReference type="ChEBI" id="CHEBI:16991"/>
    </ligand>
</feature>
<dbReference type="EC" id="3.2.2.23" evidence="2"/>
<dbReference type="EC" id="4.2.99.18" evidence="2"/>
<dbReference type="EMBL" id="CP000302">
    <property type="protein sequence ID" value="ABE53507.1"/>
    <property type="molecule type" value="Genomic_DNA"/>
</dbReference>
<dbReference type="RefSeq" id="WP_011494674.1">
    <property type="nucleotide sequence ID" value="NC_007954.1"/>
</dbReference>
<dbReference type="SMR" id="Q12SR9"/>
<dbReference type="STRING" id="318161.Sden_0210"/>
<dbReference type="KEGG" id="sdn:Sden_0210"/>
<dbReference type="eggNOG" id="COG0266">
    <property type="taxonomic scope" value="Bacteria"/>
</dbReference>
<dbReference type="HOGENOM" id="CLU_038423_1_1_6"/>
<dbReference type="OrthoDB" id="9800855at2"/>
<dbReference type="Proteomes" id="UP000001982">
    <property type="component" value="Chromosome"/>
</dbReference>
<dbReference type="GO" id="GO:0034039">
    <property type="term" value="F:8-oxo-7,8-dihydroguanine DNA N-glycosylase activity"/>
    <property type="evidence" value="ECO:0007669"/>
    <property type="project" value="TreeGrafter"/>
</dbReference>
<dbReference type="GO" id="GO:0140078">
    <property type="term" value="F:class I DNA-(apurinic or apyrimidinic site) endonuclease activity"/>
    <property type="evidence" value="ECO:0007669"/>
    <property type="project" value="UniProtKB-EC"/>
</dbReference>
<dbReference type="GO" id="GO:0003684">
    <property type="term" value="F:damaged DNA binding"/>
    <property type="evidence" value="ECO:0007669"/>
    <property type="project" value="InterPro"/>
</dbReference>
<dbReference type="GO" id="GO:0008270">
    <property type="term" value="F:zinc ion binding"/>
    <property type="evidence" value="ECO:0007669"/>
    <property type="project" value="UniProtKB-UniRule"/>
</dbReference>
<dbReference type="GO" id="GO:0006284">
    <property type="term" value="P:base-excision repair"/>
    <property type="evidence" value="ECO:0007669"/>
    <property type="project" value="InterPro"/>
</dbReference>
<dbReference type="CDD" id="cd08966">
    <property type="entry name" value="EcFpg-like_N"/>
    <property type="match status" value="1"/>
</dbReference>
<dbReference type="FunFam" id="1.10.8.50:FF:000003">
    <property type="entry name" value="Formamidopyrimidine-DNA glycosylase"/>
    <property type="match status" value="1"/>
</dbReference>
<dbReference type="FunFam" id="3.20.190.10:FF:000001">
    <property type="entry name" value="Formamidopyrimidine-DNA glycosylase"/>
    <property type="match status" value="1"/>
</dbReference>
<dbReference type="Gene3D" id="1.10.8.50">
    <property type="match status" value="1"/>
</dbReference>
<dbReference type="Gene3D" id="3.20.190.10">
    <property type="entry name" value="MutM-like, N-terminal"/>
    <property type="match status" value="1"/>
</dbReference>
<dbReference type="HAMAP" id="MF_00103">
    <property type="entry name" value="Fapy_DNA_glycosyl"/>
    <property type="match status" value="1"/>
</dbReference>
<dbReference type="InterPro" id="IPR015886">
    <property type="entry name" value="DNA_glyclase/AP_lyase_DNA-bd"/>
</dbReference>
<dbReference type="InterPro" id="IPR015887">
    <property type="entry name" value="DNA_glyclase_Znf_dom_DNA_BS"/>
</dbReference>
<dbReference type="InterPro" id="IPR020629">
    <property type="entry name" value="Formamido-pyr_DNA_Glyclase"/>
</dbReference>
<dbReference type="InterPro" id="IPR012319">
    <property type="entry name" value="FPG_cat"/>
</dbReference>
<dbReference type="InterPro" id="IPR035937">
    <property type="entry name" value="MutM-like_N-ter"/>
</dbReference>
<dbReference type="InterPro" id="IPR010979">
    <property type="entry name" value="Ribosomal_uS13-like_H2TH"/>
</dbReference>
<dbReference type="InterPro" id="IPR000214">
    <property type="entry name" value="Znf_DNA_glyclase/AP_lyase"/>
</dbReference>
<dbReference type="InterPro" id="IPR010663">
    <property type="entry name" value="Znf_FPG/IleRS"/>
</dbReference>
<dbReference type="NCBIfam" id="TIGR00577">
    <property type="entry name" value="fpg"/>
    <property type="match status" value="1"/>
</dbReference>
<dbReference type="NCBIfam" id="NF002211">
    <property type="entry name" value="PRK01103.1"/>
    <property type="match status" value="1"/>
</dbReference>
<dbReference type="PANTHER" id="PTHR22993">
    <property type="entry name" value="FORMAMIDOPYRIMIDINE-DNA GLYCOSYLASE"/>
    <property type="match status" value="1"/>
</dbReference>
<dbReference type="PANTHER" id="PTHR22993:SF9">
    <property type="entry name" value="FORMAMIDOPYRIMIDINE-DNA GLYCOSYLASE"/>
    <property type="match status" value="1"/>
</dbReference>
<dbReference type="Pfam" id="PF01149">
    <property type="entry name" value="Fapy_DNA_glyco"/>
    <property type="match status" value="1"/>
</dbReference>
<dbReference type="Pfam" id="PF06831">
    <property type="entry name" value="H2TH"/>
    <property type="match status" value="1"/>
</dbReference>
<dbReference type="Pfam" id="PF06827">
    <property type="entry name" value="zf-FPG_IleRS"/>
    <property type="match status" value="1"/>
</dbReference>
<dbReference type="SMART" id="SM00898">
    <property type="entry name" value="Fapy_DNA_glyco"/>
    <property type="match status" value="1"/>
</dbReference>
<dbReference type="SMART" id="SM01232">
    <property type="entry name" value="H2TH"/>
    <property type="match status" value="1"/>
</dbReference>
<dbReference type="SUPFAM" id="SSF57716">
    <property type="entry name" value="Glucocorticoid receptor-like (DNA-binding domain)"/>
    <property type="match status" value="1"/>
</dbReference>
<dbReference type="SUPFAM" id="SSF81624">
    <property type="entry name" value="N-terminal domain of MutM-like DNA repair proteins"/>
    <property type="match status" value="1"/>
</dbReference>
<dbReference type="SUPFAM" id="SSF46946">
    <property type="entry name" value="S13-like H2TH domain"/>
    <property type="match status" value="1"/>
</dbReference>
<dbReference type="PROSITE" id="PS51068">
    <property type="entry name" value="FPG_CAT"/>
    <property type="match status" value="1"/>
</dbReference>
<dbReference type="PROSITE" id="PS01242">
    <property type="entry name" value="ZF_FPG_1"/>
    <property type="match status" value="1"/>
</dbReference>
<dbReference type="PROSITE" id="PS51066">
    <property type="entry name" value="ZF_FPG_2"/>
    <property type="match status" value="1"/>
</dbReference>
<protein>
    <recommendedName>
        <fullName evidence="2">Formamidopyrimidine-DNA glycosylase</fullName>
        <shortName evidence="2">Fapy-DNA glycosylase</shortName>
        <ecNumber evidence="2">3.2.2.23</ecNumber>
    </recommendedName>
    <alternativeName>
        <fullName evidence="2">DNA-(apurinic or apyrimidinic site) lyase MutM</fullName>
        <shortName evidence="2">AP lyase MutM</shortName>
        <ecNumber evidence="2">4.2.99.18</ecNumber>
    </alternativeName>
</protein>
<reference key="1">
    <citation type="submission" date="2006-03" db="EMBL/GenBank/DDBJ databases">
        <title>Complete sequence of Shewanella denitrificans OS217.</title>
        <authorList>
            <consortium name="US DOE Joint Genome Institute"/>
            <person name="Copeland A."/>
            <person name="Lucas S."/>
            <person name="Lapidus A."/>
            <person name="Barry K."/>
            <person name="Detter J.C."/>
            <person name="Glavina del Rio T."/>
            <person name="Hammon N."/>
            <person name="Israni S."/>
            <person name="Dalin E."/>
            <person name="Tice H."/>
            <person name="Pitluck S."/>
            <person name="Brettin T."/>
            <person name="Bruce D."/>
            <person name="Han C."/>
            <person name="Tapia R."/>
            <person name="Gilna P."/>
            <person name="Kiss H."/>
            <person name="Schmutz J."/>
            <person name="Larimer F."/>
            <person name="Land M."/>
            <person name="Hauser L."/>
            <person name="Kyrpides N."/>
            <person name="Lykidis A."/>
            <person name="Richardson P."/>
        </authorList>
    </citation>
    <scope>NUCLEOTIDE SEQUENCE [LARGE SCALE GENOMIC DNA]</scope>
    <source>
        <strain>OS217 / ATCC BAA-1090 / DSM 15013</strain>
    </source>
</reference>
<organism>
    <name type="scientific">Shewanella denitrificans (strain OS217 / ATCC BAA-1090 / DSM 15013)</name>
    <dbReference type="NCBI Taxonomy" id="318161"/>
    <lineage>
        <taxon>Bacteria</taxon>
        <taxon>Pseudomonadati</taxon>
        <taxon>Pseudomonadota</taxon>
        <taxon>Gammaproteobacteria</taxon>
        <taxon>Alteromonadales</taxon>
        <taxon>Shewanellaceae</taxon>
        <taxon>Shewanella</taxon>
    </lineage>
</organism>
<keyword id="KW-0227">DNA damage</keyword>
<keyword id="KW-0234">DNA repair</keyword>
<keyword id="KW-0238">DNA-binding</keyword>
<keyword id="KW-0326">Glycosidase</keyword>
<keyword id="KW-0378">Hydrolase</keyword>
<keyword id="KW-0456">Lyase</keyword>
<keyword id="KW-0479">Metal-binding</keyword>
<keyword id="KW-0511">Multifunctional enzyme</keyword>
<keyword id="KW-1185">Reference proteome</keyword>
<keyword id="KW-0862">Zinc</keyword>
<keyword id="KW-0863">Zinc-finger</keyword>
<proteinExistence type="inferred from homology"/>
<name>FPG_SHEDO</name>
<comment type="function">
    <text evidence="2">Involved in base excision repair of DNA damaged by oxidation or by mutagenic agents. Acts as a DNA glycosylase that recognizes and removes damaged bases. Has a preference for oxidized purines, such as 7,8-dihydro-8-oxoguanine (8-oxoG). Has AP (apurinic/apyrimidinic) lyase activity and introduces nicks in the DNA strand. Cleaves the DNA backbone by beta-delta elimination to generate a single-strand break at the site of the removed base with both 3'- and 5'-phosphates.</text>
</comment>
<comment type="catalytic activity">
    <reaction evidence="2">
        <text>Hydrolysis of DNA containing ring-opened 7-methylguanine residues, releasing 2,6-diamino-4-hydroxy-5-(N-methyl)formamidopyrimidine.</text>
        <dbReference type="EC" id="3.2.2.23"/>
    </reaction>
</comment>
<comment type="catalytic activity">
    <reaction evidence="2">
        <text>2'-deoxyribonucleotide-(2'-deoxyribose 5'-phosphate)-2'-deoxyribonucleotide-DNA = a 3'-end 2'-deoxyribonucleotide-(2,3-dehydro-2,3-deoxyribose 5'-phosphate)-DNA + a 5'-end 5'-phospho-2'-deoxyribonucleoside-DNA + H(+)</text>
        <dbReference type="Rhea" id="RHEA:66592"/>
        <dbReference type="Rhea" id="RHEA-COMP:13180"/>
        <dbReference type="Rhea" id="RHEA-COMP:16897"/>
        <dbReference type="Rhea" id="RHEA-COMP:17067"/>
        <dbReference type="ChEBI" id="CHEBI:15378"/>
        <dbReference type="ChEBI" id="CHEBI:136412"/>
        <dbReference type="ChEBI" id="CHEBI:157695"/>
        <dbReference type="ChEBI" id="CHEBI:167181"/>
        <dbReference type="EC" id="4.2.99.18"/>
    </reaction>
</comment>
<comment type="cofactor">
    <cofactor evidence="2">
        <name>Zn(2+)</name>
        <dbReference type="ChEBI" id="CHEBI:29105"/>
    </cofactor>
    <text evidence="2">Binds 1 zinc ion per subunit.</text>
</comment>
<comment type="subunit">
    <text evidence="2">Monomer.</text>
</comment>
<comment type="similarity">
    <text evidence="2">Belongs to the FPG family.</text>
</comment>
<gene>
    <name evidence="2" type="primary">mutM</name>
    <name evidence="2" type="synonym">fpg</name>
    <name type="ordered locus">Sden_0210</name>
</gene>
<sequence>MPELPEVEVTRQGIAPYLVDQTVVELIVRNASLRWPVPDLAHNIVGQTILSVRRRAKYLLIDTEAGITIVHLGMSGSLRILPRNTPVEKHDHIDLVLANGRMLRFNDPRRFGAWLWYELPEEAHPLLAKLGPEPLSEAFNPLQLLTALKGKKKAIKLCLMDNHIVVGVGNIYANEALFAAGIHPESEAGKIDIEKLTLLVVEVKQILAQAIKQGGTTLKDFTNADGKPGYFAQKLHVYGRGSKSCTHCGNLLSEIRLGQRTTVFCGLCQTK</sequence>
<evidence type="ECO:0000250" key="1"/>
<evidence type="ECO:0000255" key="2">
    <source>
        <dbReference type="HAMAP-Rule" id="MF_00103"/>
    </source>
</evidence>